<protein>
    <recommendedName>
        <fullName evidence="5">Transcription initiation factor TFIID subunit 12</fullName>
    </recommendedName>
</protein>
<comment type="function">
    <text evidence="1 3">Part of the general transcription factor complex TFIID (By similarity). Plays a role in recruiting taf-4 to the nucleus and thereby activating transcription initiation by RNA polymerase II, as part of the TFIID complex (PubMed:18854162).</text>
</comment>
<comment type="subunit">
    <text evidence="3">Interacts (via histone-fold domain) with taf-4 (via the histone-fold domain) (PubMed:18854162). Interaction may facilitate the nuclear localization of taf-4 (PubMed:18854162).</text>
</comment>
<comment type="subcellular location">
    <subcellularLocation>
        <location evidence="3">Nucleus</location>
    </subcellularLocation>
    <text evidence="3">Localized to nucleus throughout early embryogenesis.</text>
</comment>
<comment type="alternative products">
    <event type="alternative splicing"/>
    <isoform>
        <id>Q9U226-1</id>
        <name evidence="7">a</name>
        <sequence type="displayed"/>
    </isoform>
    <isoform>
        <id>Q9U226-2</id>
        <name evidence="8">b</name>
        <sequence type="described" ref="VSP_061417"/>
    </isoform>
</comment>
<comment type="domain">
    <text evidence="3">The histone-fold domain mediates hetero-dimer protein-protein interactions.</text>
</comment>
<comment type="disruption phenotype">
    <text evidence="3">RNAi-mediated knockdown reduces nuclear localization of taf-4.</text>
</comment>
<comment type="similarity">
    <text evidence="5">Belongs to the TAF12 family.</text>
</comment>
<gene>
    <name evidence="7" type="primary">taf-12</name>
    <name evidence="7" type="ORF">Y56A3A.4</name>
</gene>
<sequence>MKMEEFSPPTSPNNHVIVQANPQIAAALSTNSPMQQGIPPQGHQNPNEQQQQQQFVGQPPMGGMGGPMRMQMPQQQIRQMPYPSPQMRAGPPPPQQQQQQHFQQMGIPQQQQPQQFTPNGQSMQMQQRPMQMGMAQGPGPSGHLMGMVGGPPPQHMMQQQGGGGPPQFVPNSSPMPLPPQQIMQVQHQQQHQQPPPSQQIQQPPIPQPQQQQAPPPQMIPAAVPYGSIMEKSKLDDLMQQISSTTVLEENVKDVLVEYADDFVSSLIDKACKMIKNREVKKIESRDIEFILKNVYNMPVVPRAASHNFGSQTEVIDLSKEKFVPTEAHKQRVALLKKQIKKL</sequence>
<dbReference type="EMBL" id="BX284603">
    <property type="protein sequence ID" value="CAB60514.2"/>
    <property type="molecule type" value="Genomic_DNA"/>
</dbReference>
<dbReference type="EMBL" id="BX284603">
    <property type="protein sequence ID" value="CAX65090.1"/>
    <property type="molecule type" value="Genomic_DNA"/>
</dbReference>
<dbReference type="RefSeq" id="NP_001255144.1">
    <molecule id="Q9U226-1"/>
    <property type="nucleotide sequence ID" value="NM_001268215.4"/>
</dbReference>
<dbReference type="RefSeq" id="NP_001255145.1">
    <molecule id="Q9U226-2"/>
    <property type="nucleotide sequence ID" value="NM_001268216.3"/>
</dbReference>
<dbReference type="SMR" id="Q9U226"/>
<dbReference type="DIP" id="DIP-24869N"/>
<dbReference type="FunCoup" id="Q9U226">
    <property type="interactions" value="1336"/>
</dbReference>
<dbReference type="IntAct" id="Q9U226">
    <property type="interactions" value="36"/>
</dbReference>
<dbReference type="STRING" id="6239.Y56A3A.4a.1"/>
<dbReference type="PaxDb" id="6239-Y56A3A.4a"/>
<dbReference type="EnsemblMetazoa" id="Y56A3A.4a.1">
    <molecule id="Q9U226-1"/>
    <property type="protein sequence ID" value="Y56A3A.4a.1"/>
    <property type="gene ID" value="WBGene00006396"/>
</dbReference>
<dbReference type="EnsemblMetazoa" id="Y56A3A.4b.1">
    <molecule id="Q9U226-2"/>
    <property type="protein sequence ID" value="Y56A3A.4b.1"/>
    <property type="gene ID" value="WBGene00006396"/>
</dbReference>
<dbReference type="GeneID" id="176617"/>
<dbReference type="KEGG" id="cel:CELE_Y56A3A.4"/>
<dbReference type="UCSC" id="Y56A3A.4">
    <molecule id="Q9U226-1"/>
    <property type="organism name" value="c. elegans"/>
</dbReference>
<dbReference type="AGR" id="WB:WBGene00006396"/>
<dbReference type="CTD" id="176617"/>
<dbReference type="WormBase" id="Y56A3A.4a">
    <molecule id="Q9U226-1"/>
    <property type="protein sequence ID" value="CE31842"/>
    <property type="gene ID" value="WBGene00006396"/>
    <property type="gene designation" value="taf-12"/>
</dbReference>
<dbReference type="WormBase" id="Y56A3A.4b">
    <molecule id="Q9U226-2"/>
    <property type="protein sequence ID" value="CE43550"/>
    <property type="gene ID" value="WBGene00006396"/>
    <property type="gene designation" value="taf-12"/>
</dbReference>
<dbReference type="eggNOG" id="KOG1142">
    <property type="taxonomic scope" value="Eukaryota"/>
</dbReference>
<dbReference type="GeneTree" id="ENSGT00390000002144"/>
<dbReference type="HOGENOM" id="CLU_797515_0_0_1"/>
<dbReference type="InParanoid" id="Q9U226"/>
<dbReference type="OMA" id="PENMQHG"/>
<dbReference type="OrthoDB" id="2193432at2759"/>
<dbReference type="Reactome" id="R-CEL-674695">
    <property type="pathway name" value="RNA Polymerase II Pre-transcription Events"/>
</dbReference>
<dbReference type="Reactome" id="R-CEL-73776">
    <property type="pathway name" value="RNA Polymerase II Promoter Escape"/>
</dbReference>
<dbReference type="Reactome" id="R-CEL-73779">
    <property type="pathway name" value="RNA Polymerase II Transcription Pre-Initiation And Promoter Opening"/>
</dbReference>
<dbReference type="Reactome" id="R-CEL-75953">
    <property type="pathway name" value="RNA Polymerase II Transcription Initiation"/>
</dbReference>
<dbReference type="Reactome" id="R-CEL-76042">
    <property type="pathway name" value="RNA Polymerase II Transcription Initiation And Promoter Clearance"/>
</dbReference>
<dbReference type="PRO" id="PR:Q9U226"/>
<dbReference type="Proteomes" id="UP000001940">
    <property type="component" value="Chromosome III"/>
</dbReference>
<dbReference type="Bgee" id="WBGene00006396">
    <property type="expression patterns" value="Expressed in germ line (C elegans) and 4 other cell types or tissues"/>
</dbReference>
<dbReference type="ExpressionAtlas" id="Q9U226">
    <property type="expression patterns" value="baseline and differential"/>
</dbReference>
<dbReference type="GO" id="GO:0005634">
    <property type="term" value="C:nucleus"/>
    <property type="evidence" value="ECO:0000314"/>
    <property type="project" value="WormBase"/>
</dbReference>
<dbReference type="GO" id="GO:0000124">
    <property type="term" value="C:SAGA complex"/>
    <property type="evidence" value="ECO:0007669"/>
    <property type="project" value="InterPro"/>
</dbReference>
<dbReference type="GO" id="GO:0005669">
    <property type="term" value="C:transcription factor TFIID complex"/>
    <property type="evidence" value="ECO:0000318"/>
    <property type="project" value="GO_Central"/>
</dbReference>
<dbReference type="GO" id="GO:0003677">
    <property type="term" value="F:DNA binding"/>
    <property type="evidence" value="ECO:0000318"/>
    <property type="project" value="GO_Central"/>
</dbReference>
<dbReference type="GO" id="GO:0046982">
    <property type="term" value="F:protein heterodimerization activity"/>
    <property type="evidence" value="ECO:0007669"/>
    <property type="project" value="InterPro"/>
</dbReference>
<dbReference type="GO" id="GO:0017025">
    <property type="term" value="F:TBP-class protein binding"/>
    <property type="evidence" value="ECO:0000318"/>
    <property type="project" value="GO_Central"/>
</dbReference>
<dbReference type="GO" id="GO:0051123">
    <property type="term" value="P:RNA polymerase II preinitiation complex assembly"/>
    <property type="evidence" value="ECO:0000318"/>
    <property type="project" value="GO_Central"/>
</dbReference>
<dbReference type="CDD" id="cd07981">
    <property type="entry name" value="HFD_TAF12"/>
    <property type="match status" value="1"/>
</dbReference>
<dbReference type="FunFam" id="1.10.20.10:FF:000123">
    <property type="entry name" value="TAF (TBP-associated transcription factor) family"/>
    <property type="match status" value="1"/>
</dbReference>
<dbReference type="Gene3D" id="1.10.20.10">
    <property type="entry name" value="Histone, subunit A"/>
    <property type="match status" value="1"/>
</dbReference>
<dbReference type="InterPro" id="IPR009072">
    <property type="entry name" value="Histone-fold"/>
</dbReference>
<dbReference type="InterPro" id="IPR037794">
    <property type="entry name" value="TAF12"/>
</dbReference>
<dbReference type="InterPro" id="IPR003228">
    <property type="entry name" value="TFIID_TAF12_dom"/>
</dbReference>
<dbReference type="PANTHER" id="PTHR12264">
    <property type="entry name" value="TRANSCRIPTION INITIATION FACTOR TFIID SUBUNIT 12"/>
    <property type="match status" value="1"/>
</dbReference>
<dbReference type="PANTHER" id="PTHR12264:SF21">
    <property type="entry name" value="TRANSCRIPTION INITIATION FACTOR TFIID SUBUNIT 12"/>
    <property type="match status" value="1"/>
</dbReference>
<dbReference type="Pfam" id="PF03847">
    <property type="entry name" value="TFIID_20kDa"/>
    <property type="match status" value="1"/>
</dbReference>
<dbReference type="SUPFAM" id="SSF47113">
    <property type="entry name" value="Histone-fold"/>
    <property type="match status" value="1"/>
</dbReference>
<organism evidence="6">
    <name type="scientific">Caenorhabditis elegans</name>
    <dbReference type="NCBI Taxonomy" id="6239"/>
    <lineage>
        <taxon>Eukaryota</taxon>
        <taxon>Metazoa</taxon>
        <taxon>Ecdysozoa</taxon>
        <taxon>Nematoda</taxon>
        <taxon>Chromadorea</taxon>
        <taxon>Rhabditida</taxon>
        <taxon>Rhabditina</taxon>
        <taxon>Rhabditomorpha</taxon>
        <taxon>Rhabditoidea</taxon>
        <taxon>Rhabditidae</taxon>
        <taxon>Peloderinae</taxon>
        <taxon>Caenorhabditis</taxon>
    </lineage>
</organism>
<name>TAF12_CAEEL</name>
<reference evidence="6" key="1">
    <citation type="journal article" date="1998" name="Science">
        <title>Genome sequence of the nematode C. elegans: a platform for investigating biology.</title>
        <authorList>
            <consortium name="The C. elegans sequencing consortium"/>
        </authorList>
    </citation>
    <scope>NUCLEOTIDE SEQUENCE [LARGE SCALE GENOMIC DNA]</scope>
    <source>
        <strain evidence="6">Bristol N2</strain>
    </source>
</reference>
<reference evidence="5" key="2">
    <citation type="journal article" date="2008" name="Cell">
        <title>Global transcriptional repression in C. elegans germline precursors by regulated sequestration of TAF-4.</title>
        <authorList>
            <person name="Guven-Ozkan T."/>
            <person name="Nishi Y."/>
            <person name="Robertson S.M."/>
            <person name="Lin R."/>
        </authorList>
    </citation>
    <scope>INTERACTION WITH TAF-4</scope>
    <scope>SUBCELLULAR LOCATION</scope>
    <scope>DOMAIN</scope>
    <scope>DISRUPTION PHENOTYPE</scope>
</reference>
<proteinExistence type="evidence at protein level"/>
<keyword id="KW-0025">Alternative splicing</keyword>
<keyword id="KW-0539">Nucleus</keyword>
<keyword id="KW-1185">Reference proteome</keyword>
<keyword id="KW-0804">Transcription</keyword>
<keyword id="KW-0805">Transcription regulation</keyword>
<accession>Q9U226</accession>
<accession>C0Z3M2</accession>
<feature type="chain" id="PRO_0000454932" description="Transcription initiation factor TFIID subunit 12">
    <location>
        <begin position="1"/>
        <end position="342"/>
    </location>
</feature>
<feature type="domain" description="Histone-fold" evidence="4">
    <location>
        <begin position="230"/>
        <end position="297"/>
    </location>
</feature>
<feature type="region of interest" description="Disordered" evidence="2">
    <location>
        <begin position="1"/>
        <end position="221"/>
    </location>
</feature>
<feature type="compositionally biased region" description="Polar residues" evidence="2">
    <location>
        <begin position="12"/>
        <end position="35"/>
    </location>
</feature>
<feature type="compositionally biased region" description="Low complexity" evidence="2">
    <location>
        <begin position="39"/>
        <end position="59"/>
    </location>
</feature>
<feature type="compositionally biased region" description="Low complexity" evidence="2">
    <location>
        <begin position="67"/>
        <end position="89"/>
    </location>
</feature>
<feature type="compositionally biased region" description="Low complexity" evidence="2">
    <location>
        <begin position="96"/>
        <end position="146"/>
    </location>
</feature>
<feature type="compositionally biased region" description="Low complexity" evidence="2">
    <location>
        <begin position="180"/>
        <end position="192"/>
    </location>
</feature>
<feature type="compositionally biased region" description="Pro residues" evidence="2">
    <location>
        <begin position="193"/>
        <end position="218"/>
    </location>
</feature>
<feature type="splice variant" id="VSP_061417" description="In isoform b." evidence="5">
    <location>
        <begin position="1"/>
        <end position="33"/>
    </location>
</feature>
<evidence type="ECO:0000250" key="1">
    <source>
        <dbReference type="UniProtKB" id="Q16514"/>
    </source>
</evidence>
<evidence type="ECO:0000256" key="2">
    <source>
        <dbReference type="SAM" id="MobiDB-lite"/>
    </source>
</evidence>
<evidence type="ECO:0000269" key="3">
    <source>
    </source>
</evidence>
<evidence type="ECO:0000303" key="4">
    <source>
    </source>
</evidence>
<evidence type="ECO:0000305" key="5"/>
<evidence type="ECO:0000312" key="6">
    <source>
        <dbReference type="Proteomes" id="UP000001940"/>
    </source>
</evidence>
<evidence type="ECO:0000312" key="7">
    <source>
        <dbReference type="WormBase" id="Y56A3A.4a"/>
    </source>
</evidence>
<evidence type="ECO:0000312" key="8">
    <source>
        <dbReference type="WormBase" id="Y56A3A.4b"/>
    </source>
</evidence>